<dbReference type="EMBL" id="AE000657">
    <property type="protein sequence ID" value="AAC07278.1"/>
    <property type="molecule type" value="Genomic_DNA"/>
</dbReference>
<dbReference type="PIR" id="F70410">
    <property type="entry name" value="F70410"/>
</dbReference>
<dbReference type="RefSeq" id="NP_213877.1">
    <property type="nucleotide sequence ID" value="NC_000918.1"/>
</dbReference>
<dbReference type="RefSeq" id="WP_010880815.1">
    <property type="nucleotide sequence ID" value="NC_000918.1"/>
</dbReference>
<dbReference type="EnsemblBacteria" id="AAC07278">
    <property type="protein sequence ID" value="AAC07278"/>
    <property type="gene ID" value="aq_1277"/>
</dbReference>
<dbReference type="KEGG" id="aae:aq_1277"/>
<dbReference type="HOGENOM" id="CLU_1425331_0_0_0"/>
<dbReference type="InParanoid" id="O67313"/>
<dbReference type="Proteomes" id="UP000000798">
    <property type="component" value="Chromosome"/>
</dbReference>
<dbReference type="PROSITE" id="PS51257">
    <property type="entry name" value="PROKAR_LIPOPROTEIN"/>
    <property type="match status" value="1"/>
</dbReference>
<gene>
    <name type="ordered locus">aq_1277</name>
</gene>
<accession>O67313</accession>
<organism>
    <name type="scientific">Aquifex aeolicus (strain VF5)</name>
    <dbReference type="NCBI Taxonomy" id="224324"/>
    <lineage>
        <taxon>Bacteria</taxon>
        <taxon>Pseudomonadati</taxon>
        <taxon>Aquificota</taxon>
        <taxon>Aquificia</taxon>
        <taxon>Aquificales</taxon>
        <taxon>Aquificaceae</taxon>
        <taxon>Aquifex</taxon>
    </lineage>
</organism>
<reference key="1">
    <citation type="journal article" date="1998" name="Nature">
        <title>The complete genome of the hyperthermophilic bacterium Aquifex aeolicus.</title>
        <authorList>
            <person name="Deckert G."/>
            <person name="Warren P.V."/>
            <person name="Gaasterland T."/>
            <person name="Young W.G."/>
            <person name="Lenox A.L."/>
            <person name="Graham D.E."/>
            <person name="Overbeek R."/>
            <person name="Snead M.A."/>
            <person name="Keller M."/>
            <person name="Aujay M."/>
            <person name="Huber R."/>
            <person name="Feldman R.A."/>
            <person name="Short J.M."/>
            <person name="Olsen G.J."/>
            <person name="Swanson R.V."/>
        </authorList>
    </citation>
    <scope>NUCLEOTIDE SEQUENCE [LARGE SCALE GENOMIC DNA]</scope>
    <source>
        <strain>VF5</strain>
    </source>
</reference>
<proteinExistence type="predicted"/>
<protein>
    <recommendedName>
        <fullName>Uncharacterized protein aq_1277</fullName>
    </recommendedName>
</protein>
<name>Y1277_AQUAE</name>
<keyword id="KW-1185">Reference proteome</keyword>
<sequence>MLRVLSILIILLTLSCAQKATFREILGKDTVRARVELVRNPSHNLAIQKVALRNLKDKLLNPPPDVKLKLKVMKKEGKLQLTEGSNADLVISMELKKLRYEEKRYKTKEEDMDITYFCVERQATADVLFNVMNAKSKEVLFAKVYKGGFYKRYCDEKGYKSEKLPKPDFIKLKAIEDAEEAFVREFYSLL</sequence>
<feature type="chain" id="PRO_0000186916" description="Uncharacterized protein aq_1277">
    <location>
        <begin position="1"/>
        <end position="190"/>
    </location>
</feature>